<feature type="transit peptide" description="Mitochondrion" evidence="2">
    <location>
        <begin position="1"/>
        <end position="15"/>
    </location>
</feature>
<feature type="chain" id="PRO_0000301705" description="Iron-sulfur cluster assembly factor IBA57 homolog, mitochondrial">
    <location>
        <begin position="16"/>
        <end position="406"/>
    </location>
</feature>
<organism>
    <name type="scientific">Phaeosphaeria nodorum (strain SN15 / ATCC MYA-4574 / FGSC 10173)</name>
    <name type="common">Glume blotch fungus</name>
    <name type="synonym">Parastagonospora nodorum</name>
    <dbReference type="NCBI Taxonomy" id="321614"/>
    <lineage>
        <taxon>Eukaryota</taxon>
        <taxon>Fungi</taxon>
        <taxon>Dikarya</taxon>
        <taxon>Ascomycota</taxon>
        <taxon>Pezizomycotina</taxon>
        <taxon>Dothideomycetes</taxon>
        <taxon>Pleosporomycetidae</taxon>
        <taxon>Pleosporales</taxon>
        <taxon>Pleosporineae</taxon>
        <taxon>Phaeosphaeriaceae</taxon>
        <taxon>Parastagonospora</taxon>
    </lineage>
</organism>
<gene>
    <name type="primary">CAF17</name>
    <name type="ORF">SNOG_09989</name>
</gene>
<sequence>MASRILAAPVQRCRRSQHDRRPIAVSATHNGFSRLPTALRSYFTEASTAQAIASGIAPLPHRSLIFLSGPTASKFLHGLITHDATRVSPFYAAFLDARGRVICDVFIWVWPELIAQQGHWACYIEVDAGQANALMLHLKRHKLRHKLTISHVPAEGRDGIKVWAAWGDAHKQVKDWGEIAGLQDPRAPGMYRYLANADRETIARDMQPVDTKFYDIQRYIHGVPEGSAEMPPYSTLPMEANIDLSSGIDFKKGCYIGQELTIRTKHTGVVRKRILPVRFHAGGAGAADPQAPVNPSFAPQPQPGMDIRTLDDTGALSKGRPTGRIVAAIGNVGLATCRIENMTSMRVSTEGGFYKEGTQFGVDVDGQVVRVEPVVHDWFVERKEALWGRGEKMKKSWVEKAQEELD</sequence>
<evidence type="ECO:0000250" key="1">
    <source>
        <dbReference type="UniProtKB" id="P47158"/>
    </source>
</evidence>
<evidence type="ECO:0000255" key="2"/>
<evidence type="ECO:0000305" key="3"/>
<dbReference type="EMBL" id="CH445340">
    <property type="protein sequence ID" value="EAT82324.1"/>
    <property type="molecule type" value="Genomic_DNA"/>
</dbReference>
<dbReference type="RefSeq" id="XP_001800273.1">
    <property type="nucleotide sequence ID" value="XM_001800221.1"/>
</dbReference>
<dbReference type="SMR" id="Q0UE25"/>
<dbReference type="FunCoup" id="Q0UE25">
    <property type="interactions" value="263"/>
</dbReference>
<dbReference type="STRING" id="321614.Q0UE25"/>
<dbReference type="EnsemblFungi" id="SNOT_09989">
    <property type="protein sequence ID" value="SNOT_09989"/>
    <property type="gene ID" value="SNOG_09989"/>
</dbReference>
<dbReference type="GeneID" id="5977179"/>
<dbReference type="KEGG" id="pno:SNOG_09989"/>
<dbReference type="VEuPathDB" id="FungiDB:JI435_099890"/>
<dbReference type="eggNOG" id="KOG2929">
    <property type="taxonomic scope" value="Eukaryota"/>
</dbReference>
<dbReference type="HOGENOM" id="CLU_007884_7_0_1"/>
<dbReference type="InParanoid" id="Q0UE25"/>
<dbReference type="OMA" id="NMLVAND"/>
<dbReference type="Proteomes" id="UP000001055">
    <property type="component" value="Unassembled WGS sequence"/>
</dbReference>
<dbReference type="GO" id="GO:0005759">
    <property type="term" value="C:mitochondrial matrix"/>
    <property type="evidence" value="ECO:0000318"/>
    <property type="project" value="GO_Central"/>
</dbReference>
<dbReference type="GO" id="GO:0016740">
    <property type="term" value="F:transferase activity"/>
    <property type="evidence" value="ECO:0007669"/>
    <property type="project" value="UniProtKB-KW"/>
</dbReference>
<dbReference type="GO" id="GO:0016226">
    <property type="term" value="P:iron-sulfur cluster assembly"/>
    <property type="evidence" value="ECO:0000318"/>
    <property type="project" value="GO_Central"/>
</dbReference>
<dbReference type="Gene3D" id="3.30.1360.120">
    <property type="entry name" value="Probable tRNA modification gtpase trme, domain 1"/>
    <property type="match status" value="1"/>
</dbReference>
<dbReference type="InterPro" id="IPR027266">
    <property type="entry name" value="TrmE/GcvT_dom1"/>
</dbReference>
<dbReference type="InterPro" id="IPR045179">
    <property type="entry name" value="YgfZ/GcvT"/>
</dbReference>
<dbReference type="InterPro" id="IPR017703">
    <property type="entry name" value="YgfZ/GcvT_CS"/>
</dbReference>
<dbReference type="NCBIfam" id="TIGR03317">
    <property type="entry name" value="ygfZ_signature"/>
    <property type="match status" value="1"/>
</dbReference>
<dbReference type="PANTHER" id="PTHR22602">
    <property type="entry name" value="TRANSFERASE CAF17, MITOCHONDRIAL-RELATED"/>
    <property type="match status" value="1"/>
</dbReference>
<dbReference type="PANTHER" id="PTHR22602:SF0">
    <property type="entry name" value="TRANSFERASE CAF17, MITOCHONDRIAL-RELATED"/>
    <property type="match status" value="1"/>
</dbReference>
<dbReference type="Pfam" id="PF25455">
    <property type="entry name" value="Beta-barrel_CAF17_C"/>
    <property type="match status" value="1"/>
</dbReference>
<dbReference type="SUPFAM" id="SSF103025">
    <property type="entry name" value="Folate-binding domain"/>
    <property type="match status" value="1"/>
</dbReference>
<accession>Q0UE25</accession>
<keyword id="KW-0496">Mitochondrion</keyword>
<keyword id="KW-0809">Transit peptide</keyword>
<comment type="subcellular location">
    <subcellularLocation>
        <location evidence="1">Mitochondrion matrix</location>
    </subcellularLocation>
</comment>
<comment type="similarity">
    <text evidence="3">Belongs to the GcvT family. CAF17/IBA57 subfamily.</text>
</comment>
<reference key="1">
    <citation type="journal article" date="2007" name="Plant Cell">
        <title>Dothideomycete-plant interactions illuminated by genome sequencing and EST analysis of the wheat pathogen Stagonospora nodorum.</title>
        <authorList>
            <person name="Hane J.K."/>
            <person name="Lowe R.G.T."/>
            <person name="Solomon P.S."/>
            <person name="Tan K.-C."/>
            <person name="Schoch C.L."/>
            <person name="Spatafora J.W."/>
            <person name="Crous P.W."/>
            <person name="Kodira C.D."/>
            <person name="Birren B.W."/>
            <person name="Galagan J.E."/>
            <person name="Torriani S.F.F."/>
            <person name="McDonald B.A."/>
            <person name="Oliver R.P."/>
        </authorList>
    </citation>
    <scope>NUCLEOTIDE SEQUENCE [LARGE SCALE GENOMIC DNA]</scope>
    <source>
        <strain>SN15 / ATCC MYA-4574 / FGSC 10173</strain>
    </source>
</reference>
<protein>
    <recommendedName>
        <fullName>Iron-sulfur cluster assembly factor IBA57 homolog, mitochondrial</fullName>
    </recommendedName>
</protein>
<proteinExistence type="inferred from homology"/>
<name>CAF17_PHANO</name>